<keyword id="KW-0007">Acetylation</keyword>
<keyword id="KW-0067">ATP-binding</keyword>
<keyword id="KW-0963">Cytoplasm</keyword>
<keyword id="KW-0237">DNA synthesis</keyword>
<keyword id="KW-0418">Kinase</keyword>
<keyword id="KW-0479">Metal-binding</keyword>
<keyword id="KW-0547">Nucleotide-binding</keyword>
<keyword id="KW-0597">Phosphoprotein</keyword>
<keyword id="KW-1185">Reference proteome</keyword>
<keyword id="KW-0808">Transferase</keyword>
<keyword id="KW-0832">Ubl conjugation</keyword>
<keyword id="KW-0862">Zinc</keyword>
<accession>A5D7R8</accession>
<accession>A7E3S3</accession>
<evidence type="ECO:0000250" key="1"/>
<evidence type="ECO:0000250" key="2">
    <source>
        <dbReference type="UniProtKB" id="P04183"/>
    </source>
</evidence>
<evidence type="ECO:0000255" key="3"/>
<evidence type="ECO:0000305" key="4"/>
<gene>
    <name type="primary">TK1</name>
</gene>
<proteinExistence type="evidence at transcript level"/>
<dbReference type="EC" id="2.7.1.21" evidence="2"/>
<dbReference type="EMBL" id="BT030694">
    <property type="protein sequence ID" value="ABS45010.1"/>
    <property type="status" value="ALT_INIT"/>
    <property type="molecule type" value="mRNA"/>
</dbReference>
<dbReference type="EMBL" id="BC140658">
    <property type="protein sequence ID" value="AAI40659.1"/>
    <property type="molecule type" value="mRNA"/>
</dbReference>
<dbReference type="RefSeq" id="NP_001091041.1">
    <property type="nucleotide sequence ID" value="NM_001097572.1"/>
</dbReference>
<dbReference type="SMR" id="A5D7R8"/>
<dbReference type="FunCoup" id="A5D7R8">
    <property type="interactions" value="381"/>
</dbReference>
<dbReference type="STRING" id="9913.ENSBTAP00000070231"/>
<dbReference type="PaxDb" id="9913-ENSBTAP00000034599"/>
<dbReference type="GeneID" id="504652"/>
<dbReference type="KEGG" id="bta:504652"/>
<dbReference type="CTD" id="7083"/>
<dbReference type="eggNOG" id="KOG3125">
    <property type="taxonomic scope" value="Eukaryota"/>
</dbReference>
<dbReference type="HOGENOM" id="CLU_064400_3_1_1"/>
<dbReference type="InParanoid" id="A5D7R8"/>
<dbReference type="OrthoDB" id="439028at2759"/>
<dbReference type="TreeFam" id="TF314839"/>
<dbReference type="Proteomes" id="UP000009136">
    <property type="component" value="Unplaced"/>
</dbReference>
<dbReference type="GO" id="GO:0005737">
    <property type="term" value="C:cytoplasm"/>
    <property type="evidence" value="ECO:0007669"/>
    <property type="project" value="UniProtKB-SubCell"/>
</dbReference>
<dbReference type="GO" id="GO:0005524">
    <property type="term" value="F:ATP binding"/>
    <property type="evidence" value="ECO:0007669"/>
    <property type="project" value="UniProtKB-KW"/>
</dbReference>
<dbReference type="GO" id="GO:0004797">
    <property type="term" value="F:thymidine kinase activity"/>
    <property type="evidence" value="ECO:0000250"/>
    <property type="project" value="UniProtKB"/>
</dbReference>
<dbReference type="GO" id="GO:0008270">
    <property type="term" value="F:zinc ion binding"/>
    <property type="evidence" value="ECO:0000250"/>
    <property type="project" value="UniProtKB"/>
</dbReference>
<dbReference type="GO" id="GO:0071897">
    <property type="term" value="P:DNA biosynthetic process"/>
    <property type="evidence" value="ECO:0007669"/>
    <property type="project" value="UniProtKB-KW"/>
</dbReference>
<dbReference type="GO" id="GO:0051289">
    <property type="term" value="P:protein homotetramerization"/>
    <property type="evidence" value="ECO:0000250"/>
    <property type="project" value="UniProtKB"/>
</dbReference>
<dbReference type="GO" id="GO:0046104">
    <property type="term" value="P:thymidine metabolic process"/>
    <property type="evidence" value="ECO:0000250"/>
    <property type="project" value="UniProtKB"/>
</dbReference>
<dbReference type="FunFam" id="3.30.60.20:FF:000028">
    <property type="entry name" value="Thymidine kinase"/>
    <property type="match status" value="1"/>
</dbReference>
<dbReference type="FunFam" id="3.40.50.300:FF:000761">
    <property type="entry name" value="Thymidine kinase"/>
    <property type="match status" value="1"/>
</dbReference>
<dbReference type="Gene3D" id="3.30.60.20">
    <property type="match status" value="1"/>
</dbReference>
<dbReference type="Gene3D" id="3.40.50.300">
    <property type="entry name" value="P-loop containing nucleotide triphosphate hydrolases"/>
    <property type="match status" value="1"/>
</dbReference>
<dbReference type="InterPro" id="IPR027417">
    <property type="entry name" value="P-loop_NTPase"/>
</dbReference>
<dbReference type="InterPro" id="IPR001267">
    <property type="entry name" value="Thymidine_kinase"/>
</dbReference>
<dbReference type="InterPro" id="IPR020633">
    <property type="entry name" value="Thymidine_kinase_CS"/>
</dbReference>
<dbReference type="PANTHER" id="PTHR11441">
    <property type="entry name" value="THYMIDINE KINASE"/>
    <property type="match status" value="1"/>
</dbReference>
<dbReference type="PANTHER" id="PTHR11441:SF0">
    <property type="entry name" value="THYMIDINE KINASE, CYTOSOLIC"/>
    <property type="match status" value="1"/>
</dbReference>
<dbReference type="Pfam" id="PF00265">
    <property type="entry name" value="TK"/>
    <property type="match status" value="1"/>
</dbReference>
<dbReference type="SUPFAM" id="SSF57716">
    <property type="entry name" value="Glucocorticoid receptor-like (DNA-binding domain)"/>
    <property type="match status" value="1"/>
</dbReference>
<dbReference type="SUPFAM" id="SSF52540">
    <property type="entry name" value="P-loop containing nucleoside triphosphate hydrolases"/>
    <property type="match status" value="1"/>
</dbReference>
<dbReference type="PROSITE" id="PS00603">
    <property type="entry name" value="TK_CELLULAR_TYPE"/>
    <property type="match status" value="1"/>
</dbReference>
<organism>
    <name type="scientific">Bos taurus</name>
    <name type="common">Bovine</name>
    <dbReference type="NCBI Taxonomy" id="9913"/>
    <lineage>
        <taxon>Eukaryota</taxon>
        <taxon>Metazoa</taxon>
        <taxon>Chordata</taxon>
        <taxon>Craniata</taxon>
        <taxon>Vertebrata</taxon>
        <taxon>Euteleostomi</taxon>
        <taxon>Mammalia</taxon>
        <taxon>Eutheria</taxon>
        <taxon>Laurasiatheria</taxon>
        <taxon>Artiodactyla</taxon>
        <taxon>Ruminantia</taxon>
        <taxon>Pecora</taxon>
        <taxon>Bovidae</taxon>
        <taxon>Bovinae</taxon>
        <taxon>Bos</taxon>
    </lineage>
</organism>
<comment type="function">
    <text evidence="2">Cell-cycle-regulated enzyme of importance in nucleotide metabolism. Catalyzes the first enzymatic step in the salvage pathway converting thymidine into thymidine monophosphate. Transcriptional regulation limits expression to the S phase of the cell cycle and transient expression coincides with the oscillation in the intracellular dTTP concentration.</text>
</comment>
<comment type="catalytic activity">
    <reaction evidence="2">
        <text>thymidine + ATP = dTMP + ADP + H(+)</text>
        <dbReference type="Rhea" id="RHEA:19129"/>
        <dbReference type="ChEBI" id="CHEBI:15378"/>
        <dbReference type="ChEBI" id="CHEBI:17748"/>
        <dbReference type="ChEBI" id="CHEBI:30616"/>
        <dbReference type="ChEBI" id="CHEBI:63528"/>
        <dbReference type="ChEBI" id="CHEBI:456216"/>
        <dbReference type="EC" id="2.7.1.21"/>
    </reaction>
    <physiologicalReaction direction="left-to-right" evidence="2">
        <dbReference type="Rhea" id="RHEA:19130"/>
    </physiologicalReaction>
</comment>
<comment type="subunit">
    <text evidence="2">Homotetramer. Tetramerization from dimerization is induced by ATP and increases catalytic efficiency due to a high affinity for thymidine. Tetramerization is inhibited by phosphorylation at Ser-13. Interacts (via the KEN box) with FZR1.</text>
</comment>
<comment type="subcellular location">
    <subcellularLocation>
        <location evidence="1">Cytoplasm</location>
    </subcellularLocation>
</comment>
<comment type="domain">
    <text evidence="2">KEN box sequence located in the C-terminal region is required for its mitotic degradation by the APC/C-FZR1 ubiquitin ligase and interaction capability with FZR1.</text>
</comment>
<comment type="PTM">
    <text evidence="2">Phosphorylated on Ser-13 in mitosis. Phosphorylation of Ser-13 by CDK1 during mitosis reduces homotetramerization and catalytic efficiency when DNA replication is complete and intracellular TK1 is still present at a high level.</text>
</comment>
<comment type="PTM">
    <text evidence="2">Polyubiquitinated. Postmitosis, ubiquitination leads to proteasomal degradation. The KEN box sequence located at the C-terminal region targets for degradation by the anaphase promoting complex (APC/C) activated and rate-limited by FZR1.</text>
</comment>
<comment type="miscellaneous">
    <text>Two forms have been identified in animal cells, one in cytosol and one in mitochondria. Activity of the cytosolic enzyme is high in proliferating cells and peaks during the S-phase of the cell cycle; it is very low in resting cells.</text>
</comment>
<comment type="similarity">
    <text evidence="4">Belongs to the thymidine kinase family.</text>
</comment>
<comment type="sequence caution" evidence="4">
    <conflict type="erroneous initiation">
        <sequence resource="EMBL-CDS" id="ABS45010"/>
    </conflict>
</comment>
<feature type="initiator methionine" description="Removed" evidence="2">
    <location>
        <position position="1"/>
    </location>
</feature>
<feature type="chain" id="PRO_0000322129" description="Thymidine kinase, cytosolic">
    <location>
        <begin position="2"/>
        <end position="238"/>
    </location>
</feature>
<feature type="short sequence motif" description="KEN box" evidence="2">
    <location>
        <begin position="206"/>
        <end position="208"/>
    </location>
</feature>
<feature type="active site" description="Proton acceptor" evidence="3">
    <location>
        <position position="98"/>
    </location>
</feature>
<feature type="binding site" evidence="4">
    <location>
        <begin position="26"/>
        <end position="33"/>
    </location>
    <ligand>
        <name>ATP</name>
        <dbReference type="ChEBI" id="CHEBI:30616"/>
    </ligand>
</feature>
<feature type="binding site" evidence="2">
    <location>
        <begin position="58"/>
        <end position="60"/>
    </location>
    <ligand>
        <name>ATP</name>
        <dbReference type="ChEBI" id="CHEBI:30616"/>
    </ligand>
</feature>
<feature type="binding site" evidence="2">
    <location>
        <begin position="97"/>
        <end position="100"/>
    </location>
    <ligand>
        <name>ATP</name>
        <dbReference type="ChEBI" id="CHEBI:30616"/>
    </ligand>
</feature>
<feature type="binding site" evidence="2">
    <location>
        <position position="128"/>
    </location>
    <ligand>
        <name>substrate</name>
    </ligand>
</feature>
<feature type="binding site" evidence="2">
    <location>
        <position position="153"/>
    </location>
    <ligand>
        <name>Zn(2+)</name>
        <dbReference type="ChEBI" id="CHEBI:29105"/>
    </ligand>
</feature>
<feature type="binding site" evidence="2">
    <location>
        <position position="156"/>
    </location>
    <ligand>
        <name>Zn(2+)</name>
        <dbReference type="ChEBI" id="CHEBI:29105"/>
    </ligand>
</feature>
<feature type="binding site" evidence="2">
    <location>
        <begin position="172"/>
        <end position="176"/>
    </location>
    <ligand>
        <name>substrate</name>
    </ligand>
</feature>
<feature type="binding site" evidence="2">
    <location>
        <position position="181"/>
    </location>
    <ligand>
        <name>substrate</name>
    </ligand>
</feature>
<feature type="binding site" evidence="2">
    <location>
        <position position="185"/>
    </location>
    <ligand>
        <name>Zn(2+)</name>
        <dbReference type="ChEBI" id="CHEBI:29105"/>
    </ligand>
</feature>
<feature type="binding site" evidence="2">
    <location>
        <position position="188"/>
    </location>
    <ligand>
        <name>Zn(2+)</name>
        <dbReference type="ChEBI" id="CHEBI:29105"/>
    </ligand>
</feature>
<feature type="modified residue" description="N-acetylserine" evidence="2">
    <location>
        <position position="2"/>
    </location>
</feature>
<feature type="modified residue" description="Phosphoserine" evidence="2">
    <location>
        <position position="2"/>
    </location>
</feature>
<feature type="modified residue" description="Phosphoserine" evidence="2">
    <location>
        <position position="13"/>
    </location>
</feature>
<feature type="modified residue" description="Phosphoserine" evidence="2">
    <location>
        <position position="235"/>
    </location>
</feature>
<protein>
    <recommendedName>
        <fullName>Thymidine kinase, cytosolic</fullName>
        <ecNumber evidence="2">2.7.1.21</ecNumber>
    </recommendedName>
</protein>
<reference key="1">
    <citation type="journal article" date="2005" name="BMC Genomics">
        <title>Characterization of 954 bovine full-CDS cDNA sequences.</title>
        <authorList>
            <person name="Harhay G.P."/>
            <person name="Sonstegard T.S."/>
            <person name="Keele J.W."/>
            <person name="Heaton M.P."/>
            <person name="Clawson M.L."/>
            <person name="Snelling W.M."/>
            <person name="Wiedmann R.T."/>
            <person name="Van Tassell C.P."/>
            <person name="Smith T.P.L."/>
        </authorList>
    </citation>
    <scope>NUCLEOTIDE SEQUENCE [LARGE SCALE MRNA]</scope>
</reference>
<reference key="2">
    <citation type="submission" date="2007-04" db="EMBL/GenBank/DDBJ databases">
        <authorList>
            <consortium name="NIH - Mammalian Gene Collection (MGC) project"/>
        </authorList>
    </citation>
    <scope>NUCLEOTIDE SEQUENCE [LARGE SCALE MRNA]</scope>
    <source>
        <strain>Hereford</strain>
        <tissue>Fetal liver</tissue>
    </source>
</reference>
<name>KITH_BOVIN</name>
<sequence>MSCINLPNVLPGSPSKTRGQIQVILGPMFSGKSTELMRRVRRFQVAQYKCLVIKYAKDTRYSSLFSTHDRNTMEALPACLLRDVIQDAQRVAVIGIDEGQFFPDIVEFCENMANSGKTVIVAALDGTFQRKAFGTILNLVPLAESVVKLTAVCMECFREAAYTKRLGVEKEVEVIGGADKYHSVCRLCYFKKASGQPAVLDSEENKENCPMTLGKPAEAPGVRKLFATHQIWQCSQAN</sequence>